<protein>
    <recommendedName>
        <fullName evidence="1">Ribosomal RNA large subunit methyltransferase H</fullName>
        <ecNumber evidence="1">2.1.1.177</ecNumber>
    </recommendedName>
    <alternativeName>
        <fullName evidence="1">23S rRNA (pseudouridine1915-N3)-methyltransferase</fullName>
    </alternativeName>
    <alternativeName>
        <fullName evidence="1">23S rRNA m3Psi1915 methyltransferase</fullName>
    </alternativeName>
    <alternativeName>
        <fullName evidence="1">rRNA (pseudouridine-N3-)-methyltransferase RlmH</fullName>
    </alternativeName>
</protein>
<sequence length="159" mass="18215">MIIKIISVGKLKQTGFVNLVNDYLKRINYYLKCQEIVVNDEPEPTQISTKLLEQIKDKEANRILKNINQNDFVIALIIEGKIISSEMLAENLQNWLNASYPNICFVIGGSNGLHEKIYERANYHLSLSKMTFAHGLAKVMVCEQIYRALSILNNGKYHK</sequence>
<evidence type="ECO:0000255" key="1">
    <source>
        <dbReference type="HAMAP-Rule" id="MF_00658"/>
    </source>
</evidence>
<organism>
    <name type="scientific">Ureaplasma urealyticum serovar 10 (strain ATCC 33699 / Western)</name>
    <dbReference type="NCBI Taxonomy" id="565575"/>
    <lineage>
        <taxon>Bacteria</taxon>
        <taxon>Bacillati</taxon>
        <taxon>Mycoplasmatota</taxon>
        <taxon>Mycoplasmoidales</taxon>
        <taxon>Mycoplasmoidaceae</taxon>
        <taxon>Ureaplasma</taxon>
    </lineage>
</organism>
<gene>
    <name evidence="1" type="primary">rlmH</name>
    <name type="ordered locus">UUR10_0171</name>
</gene>
<comment type="function">
    <text evidence="1">Specifically methylates the pseudouridine at position 1915 (m3Psi1915) in 23S rRNA.</text>
</comment>
<comment type="catalytic activity">
    <reaction evidence="1">
        <text>pseudouridine(1915) in 23S rRNA + S-adenosyl-L-methionine = N(3)-methylpseudouridine(1915) in 23S rRNA + S-adenosyl-L-homocysteine + H(+)</text>
        <dbReference type="Rhea" id="RHEA:42752"/>
        <dbReference type="Rhea" id="RHEA-COMP:10221"/>
        <dbReference type="Rhea" id="RHEA-COMP:10222"/>
        <dbReference type="ChEBI" id="CHEBI:15378"/>
        <dbReference type="ChEBI" id="CHEBI:57856"/>
        <dbReference type="ChEBI" id="CHEBI:59789"/>
        <dbReference type="ChEBI" id="CHEBI:65314"/>
        <dbReference type="ChEBI" id="CHEBI:74486"/>
        <dbReference type="EC" id="2.1.1.177"/>
    </reaction>
</comment>
<comment type="subunit">
    <text evidence="1">Homodimer.</text>
</comment>
<comment type="subcellular location">
    <subcellularLocation>
        <location evidence="1">Cytoplasm</location>
    </subcellularLocation>
</comment>
<comment type="similarity">
    <text evidence="1">Belongs to the RNA methyltransferase RlmH family.</text>
</comment>
<feature type="chain" id="PRO_0000366673" description="Ribosomal RNA large subunit methyltransferase H">
    <location>
        <begin position="1"/>
        <end position="159"/>
    </location>
</feature>
<feature type="binding site" evidence="1">
    <location>
        <position position="76"/>
    </location>
    <ligand>
        <name>S-adenosyl-L-methionine</name>
        <dbReference type="ChEBI" id="CHEBI:59789"/>
    </ligand>
</feature>
<feature type="binding site" evidence="1">
    <location>
        <position position="108"/>
    </location>
    <ligand>
        <name>S-adenosyl-L-methionine</name>
        <dbReference type="ChEBI" id="CHEBI:59789"/>
    </ligand>
</feature>
<feature type="binding site" evidence="1">
    <location>
        <begin position="127"/>
        <end position="132"/>
    </location>
    <ligand>
        <name>S-adenosyl-L-methionine</name>
        <dbReference type="ChEBI" id="CHEBI:59789"/>
    </ligand>
</feature>
<reference key="1">
    <citation type="submission" date="2008-10" db="EMBL/GenBank/DDBJ databases">
        <title>Genome sequence of Ureaplasma urealyticum serovar 10 ATCC-33699.</title>
        <authorList>
            <person name="Shrivastava S."/>
            <person name="Methe B.A."/>
            <person name="Glass J."/>
            <person name="White K."/>
            <person name="Duffy L.B."/>
        </authorList>
    </citation>
    <scope>NUCLEOTIDE SEQUENCE [LARGE SCALE GENOMIC DNA]</scope>
    <source>
        <strain>ATCC 33699 / Western</strain>
    </source>
</reference>
<name>RLMH_UREU1</name>
<accession>B5ZAY6</accession>
<proteinExistence type="inferred from homology"/>
<dbReference type="EC" id="2.1.1.177" evidence="1"/>
<dbReference type="EMBL" id="CP001184">
    <property type="protein sequence ID" value="ACI59898.1"/>
    <property type="molecule type" value="Genomic_DNA"/>
</dbReference>
<dbReference type="RefSeq" id="WP_004025892.1">
    <property type="nucleotide sequence ID" value="NC_011374.1"/>
</dbReference>
<dbReference type="SMR" id="B5ZAY6"/>
<dbReference type="STRING" id="565575.UUR10_0171"/>
<dbReference type="GeneID" id="93848652"/>
<dbReference type="KEGG" id="uue:UUR10_0171"/>
<dbReference type="eggNOG" id="COG1576">
    <property type="taxonomic scope" value="Bacteria"/>
</dbReference>
<dbReference type="HOGENOM" id="CLU_100552_0_0_14"/>
<dbReference type="OrthoDB" id="9806643at2"/>
<dbReference type="Proteomes" id="UP000002018">
    <property type="component" value="Chromosome"/>
</dbReference>
<dbReference type="GO" id="GO:0005737">
    <property type="term" value="C:cytoplasm"/>
    <property type="evidence" value="ECO:0007669"/>
    <property type="project" value="UniProtKB-SubCell"/>
</dbReference>
<dbReference type="GO" id="GO:0070038">
    <property type="term" value="F:rRNA (pseudouridine-N3-)-methyltransferase activity"/>
    <property type="evidence" value="ECO:0007669"/>
    <property type="project" value="UniProtKB-UniRule"/>
</dbReference>
<dbReference type="CDD" id="cd18081">
    <property type="entry name" value="RlmH-like"/>
    <property type="match status" value="1"/>
</dbReference>
<dbReference type="Gene3D" id="3.40.1280.10">
    <property type="match status" value="1"/>
</dbReference>
<dbReference type="HAMAP" id="MF_00658">
    <property type="entry name" value="23SrRNA_methyltr_H"/>
    <property type="match status" value="1"/>
</dbReference>
<dbReference type="InterPro" id="IPR029028">
    <property type="entry name" value="Alpha/beta_knot_MTases"/>
</dbReference>
<dbReference type="InterPro" id="IPR003742">
    <property type="entry name" value="RlmH-like"/>
</dbReference>
<dbReference type="InterPro" id="IPR029026">
    <property type="entry name" value="tRNA_m1G_MTases_N"/>
</dbReference>
<dbReference type="NCBIfam" id="NF000985">
    <property type="entry name" value="PRK00103.1-3"/>
    <property type="match status" value="1"/>
</dbReference>
<dbReference type="PANTHER" id="PTHR33603">
    <property type="entry name" value="METHYLTRANSFERASE"/>
    <property type="match status" value="1"/>
</dbReference>
<dbReference type="PANTHER" id="PTHR33603:SF1">
    <property type="entry name" value="RIBOSOMAL RNA LARGE SUBUNIT METHYLTRANSFERASE H"/>
    <property type="match status" value="1"/>
</dbReference>
<dbReference type="Pfam" id="PF02590">
    <property type="entry name" value="SPOUT_MTase"/>
    <property type="match status" value="1"/>
</dbReference>
<dbReference type="PIRSF" id="PIRSF004505">
    <property type="entry name" value="MT_bac"/>
    <property type="match status" value="1"/>
</dbReference>
<dbReference type="SUPFAM" id="SSF75217">
    <property type="entry name" value="alpha/beta knot"/>
    <property type="match status" value="1"/>
</dbReference>
<keyword id="KW-0963">Cytoplasm</keyword>
<keyword id="KW-0489">Methyltransferase</keyword>
<keyword id="KW-0698">rRNA processing</keyword>
<keyword id="KW-0949">S-adenosyl-L-methionine</keyword>
<keyword id="KW-0808">Transferase</keyword>